<sequence>MTSIFHFAIIFMLILQIRIQLSEESEFLVDRSKNGLIHVPKDLSQKTTILNISQNYISELWTSDILSLSKLRILIISHNRIQYLDISVFKFNQELEYLDLSHNKLVKISCHPTVNLKHLDLSFNAFDALPICKEFGNMSQLKFLGLSTTHLEKSSVLPIAHLNISKVLLVLGETYGEKEDPEGLQDFNTESLHIVFPTNKEFHFILDVSVKTVANLELSNIKCVLEDNKCSYFLSILAKLQTNPKLSNLTLNNIETTWNSFIRILQLVWHTTVWYFSISNVKLQGQLDFRDFDYSGTSLKALSIHQVVSDVFGFPQSYIYEIFSNMNIKNFTVSGTRMVHMLCPSKISPFLHLDFSNNLLTDTVFENCGHLTELETLILQMNQLKELSKIAEMTTQMKSLQQLDISQNSVSYDEKKGDCSWTKSLLSLNMSSNILTDTIFRCLPPRIKVLDLHSNKIKSIPKQVVKLEALQELNVAFNSLTDLPGCGSFSSLSVLIIDHNSVSHPSADFFQSCQKMRSIKAGDNPFQCTCELGEFVKNIDQVSSEVLEGWPDSYKCDYPESYRGTLLKDFHMSELSCNITLLIVTIVATMLVLAVTVTSLCSYLDLPWYLRMVCQWTQTRRRARNIPLEELQRNLQFHAFISYSGHDSFWVKNELLPNLEKEGMQICLHERNFVPGKSIVENIITCIEKSYKSIFVLSPNFVQSEWCHYELYFAHHNLFHEGSNSLILILLEPIPQYSIPSSYHKLKSLMARRTYLEWPKEKSKRGLFWANLRAAINIKLTEQAKK</sequence>
<dbReference type="EMBL" id="U88540">
    <property type="protein sequence ID" value="AAC34137.1"/>
    <property type="molecule type" value="mRNA"/>
</dbReference>
<dbReference type="EMBL" id="AB445617">
    <property type="protein sequence ID" value="BAG55014.1"/>
    <property type="molecule type" value="mRNA"/>
</dbReference>
<dbReference type="EMBL" id="DQ012259">
    <property type="protein sequence ID" value="AAY85638.1"/>
    <property type="molecule type" value="mRNA"/>
</dbReference>
<dbReference type="EMBL" id="DQ012260">
    <property type="protein sequence ID" value="AAY85639.1"/>
    <property type="molecule type" value="mRNA"/>
</dbReference>
<dbReference type="EMBL" id="DQ012261">
    <property type="protein sequence ID" value="AAY85640.1"/>
    <property type="molecule type" value="mRNA"/>
</dbReference>
<dbReference type="EMBL" id="D13637">
    <property type="protein sequence ID" value="BAA02801.2"/>
    <property type="status" value="ALT_INIT"/>
    <property type="molecule type" value="mRNA"/>
</dbReference>
<dbReference type="EMBL" id="AL050262">
    <property type="protein sequence ID" value="CAB43364.1"/>
    <property type="molecule type" value="mRNA"/>
</dbReference>
<dbReference type="EMBL" id="BC109093">
    <property type="protein sequence ID" value="AAI09094.1"/>
    <property type="molecule type" value="mRNA"/>
</dbReference>
<dbReference type="EMBL" id="BC109094">
    <property type="protein sequence ID" value="AAI09095.1"/>
    <property type="molecule type" value="mRNA"/>
</dbReference>
<dbReference type="CCDS" id="CCDS33973.1"/>
<dbReference type="PIR" id="T08664">
    <property type="entry name" value="T08664"/>
</dbReference>
<dbReference type="RefSeq" id="NP_003254.2">
    <property type="nucleotide sequence ID" value="NM_003263.3"/>
</dbReference>
<dbReference type="RefSeq" id="XP_005262719.1">
    <property type="nucleotide sequence ID" value="XM_005262662.6"/>
</dbReference>
<dbReference type="RefSeq" id="XP_011512044.1">
    <property type="nucleotide sequence ID" value="XM_011513742.4"/>
</dbReference>
<dbReference type="RefSeq" id="XP_011512045.1">
    <property type="nucleotide sequence ID" value="XM_011513743.2"/>
</dbReference>
<dbReference type="RefSeq" id="XP_011512046.1">
    <property type="nucleotide sequence ID" value="XM_011513744.2"/>
</dbReference>
<dbReference type="RefSeq" id="XP_011512047.1">
    <property type="nucleotide sequence ID" value="XM_011513745.4"/>
</dbReference>
<dbReference type="RefSeq" id="XP_016864060.1">
    <property type="nucleotide sequence ID" value="XM_017008571.3"/>
</dbReference>
<dbReference type="RefSeq" id="XP_016864061.1">
    <property type="nucleotide sequence ID" value="XM_017008572.3"/>
</dbReference>
<dbReference type="RefSeq" id="XP_024309964.1">
    <property type="nucleotide sequence ID" value="XM_024454196.2"/>
</dbReference>
<dbReference type="PDB" id="1FYV">
    <property type="method" value="X-ray"/>
    <property type="resolution" value="2.90 A"/>
    <property type="chains" value="A=625-785"/>
</dbReference>
<dbReference type="PDB" id="2Z7X">
    <property type="method" value="X-ray"/>
    <property type="resolution" value="2.10 A"/>
    <property type="chains" value="B=25-475"/>
</dbReference>
<dbReference type="PDB" id="6NIH">
    <property type="method" value="X-ray"/>
    <property type="resolution" value="2.30 A"/>
    <property type="chains" value="A/B=1-475"/>
</dbReference>
<dbReference type="PDB" id="7NT7">
    <property type="method" value="NMR"/>
    <property type="chains" value="A=625-786"/>
</dbReference>
<dbReference type="PDB" id="7NUW">
    <property type="method" value="X-ray"/>
    <property type="resolution" value="1.90 A"/>
    <property type="chains" value="A=625-785"/>
</dbReference>
<dbReference type="PDB" id="7NUX">
    <property type="method" value="X-ray"/>
    <property type="resolution" value="2.47 A"/>
    <property type="chains" value="A=625-785"/>
</dbReference>
<dbReference type="PDBsum" id="1FYV"/>
<dbReference type="PDBsum" id="2Z7X"/>
<dbReference type="PDBsum" id="6NIH"/>
<dbReference type="PDBsum" id="7NT7"/>
<dbReference type="PDBsum" id="7NUW"/>
<dbReference type="PDBsum" id="7NUX"/>
<dbReference type="SMR" id="Q15399"/>
<dbReference type="BioGRID" id="112951">
    <property type="interactions" value="27"/>
</dbReference>
<dbReference type="ComplexPortal" id="CPX-2699">
    <property type="entry name" value="TLR1-TLR10 toll-like receptor complex"/>
</dbReference>
<dbReference type="ComplexPortal" id="CPX-893">
    <property type="entry name" value="TLR1-TLR2 toll-like receptor complex"/>
</dbReference>
<dbReference type="CORUM" id="Q15399"/>
<dbReference type="FunCoup" id="Q15399">
    <property type="interactions" value="190"/>
</dbReference>
<dbReference type="IntAct" id="Q15399">
    <property type="interactions" value="15"/>
</dbReference>
<dbReference type="STRING" id="9606.ENSP00000354932"/>
<dbReference type="BindingDB" id="Q15399"/>
<dbReference type="ChEMBL" id="CHEMBL3714412"/>
<dbReference type="TCDB" id="8.A.43.1.25">
    <property type="family name" value="the neat-domain containing methaemoglobin heme sequestration (n-mhs) family"/>
</dbReference>
<dbReference type="GlyCosmos" id="Q15399">
    <property type="glycosylation" value="6 sites, No reported glycans"/>
</dbReference>
<dbReference type="GlyGen" id="Q15399">
    <property type="glycosylation" value="7 sites, 3 N-linked glycans (3 sites)"/>
</dbReference>
<dbReference type="iPTMnet" id="Q15399"/>
<dbReference type="PhosphoSitePlus" id="Q15399"/>
<dbReference type="BioMuta" id="TLR1"/>
<dbReference type="DMDM" id="146291086"/>
<dbReference type="jPOST" id="Q15399"/>
<dbReference type="MassIVE" id="Q15399"/>
<dbReference type="PaxDb" id="9606-ENSP00000354932"/>
<dbReference type="PeptideAtlas" id="Q15399"/>
<dbReference type="ProteomicsDB" id="60569"/>
<dbReference type="Antibodypedia" id="10459">
    <property type="antibodies" value="679 antibodies from 43 providers"/>
</dbReference>
<dbReference type="DNASU" id="7096"/>
<dbReference type="Ensembl" id="ENST00000308979.7">
    <property type="protein sequence ID" value="ENSP00000354932.2"/>
    <property type="gene ID" value="ENSG00000174125.9"/>
</dbReference>
<dbReference type="Ensembl" id="ENST00000502213.7">
    <property type="protein sequence ID" value="ENSP00000421259.1"/>
    <property type="gene ID" value="ENSG00000174125.9"/>
</dbReference>
<dbReference type="GeneID" id="7096"/>
<dbReference type="KEGG" id="hsa:7096"/>
<dbReference type="MANE-Select" id="ENST00000308979.7">
    <property type="protein sequence ID" value="ENSP00000354932.2"/>
    <property type="RefSeq nucleotide sequence ID" value="NM_003263.4"/>
    <property type="RefSeq protein sequence ID" value="NP_003254.2"/>
</dbReference>
<dbReference type="UCSC" id="uc003gtl.4">
    <property type="organism name" value="human"/>
</dbReference>
<dbReference type="AGR" id="HGNC:11847"/>
<dbReference type="CTD" id="7096"/>
<dbReference type="DisGeNET" id="7096"/>
<dbReference type="GeneCards" id="TLR1"/>
<dbReference type="HGNC" id="HGNC:11847">
    <property type="gene designation" value="TLR1"/>
</dbReference>
<dbReference type="HPA" id="ENSG00000174125">
    <property type="expression patterns" value="Tissue enhanced (bone marrow, lymphoid tissue)"/>
</dbReference>
<dbReference type="MalaCards" id="TLR1"/>
<dbReference type="MIM" id="601194">
    <property type="type" value="gene"/>
</dbReference>
<dbReference type="MIM" id="613223">
    <property type="type" value="phenotype"/>
</dbReference>
<dbReference type="neXtProt" id="NX_Q15399"/>
<dbReference type="OpenTargets" id="ENSG00000174125"/>
<dbReference type="PharmGKB" id="PA36549"/>
<dbReference type="VEuPathDB" id="HostDB:ENSG00000174125"/>
<dbReference type="eggNOG" id="KOG4641">
    <property type="taxonomic scope" value="Eukaryota"/>
</dbReference>
<dbReference type="GeneTree" id="ENSGT00940000162884"/>
<dbReference type="HOGENOM" id="CLU_006000_3_0_1"/>
<dbReference type="InParanoid" id="Q15399"/>
<dbReference type="OMA" id="GKISCHP"/>
<dbReference type="OrthoDB" id="1081807at2759"/>
<dbReference type="PAN-GO" id="Q15399">
    <property type="GO annotations" value="8 GO annotations based on evolutionary models"/>
</dbReference>
<dbReference type="PhylomeDB" id="Q15399"/>
<dbReference type="TreeFam" id="TF351113"/>
<dbReference type="PathwayCommons" id="Q15399"/>
<dbReference type="Reactome" id="R-HSA-1236974">
    <property type="pathway name" value="ER-Phagosome pathway"/>
</dbReference>
<dbReference type="Reactome" id="R-HSA-1461957">
    <property type="pathway name" value="Beta defensins"/>
</dbReference>
<dbReference type="Reactome" id="R-HSA-166058">
    <property type="pathway name" value="MyD88:MAL(TIRAP) cascade initiated on plasma membrane"/>
</dbReference>
<dbReference type="Reactome" id="R-HSA-168179">
    <property type="pathway name" value="Toll Like Receptor TLR1:TLR2 Cascade"/>
</dbReference>
<dbReference type="Reactome" id="R-HSA-5602498">
    <property type="pathway name" value="MyD88 deficiency (TLR2/4)"/>
</dbReference>
<dbReference type="Reactome" id="R-HSA-5603041">
    <property type="pathway name" value="IRAK4 deficiency (TLR2/4)"/>
</dbReference>
<dbReference type="Reactome" id="R-HSA-5686938">
    <property type="pathway name" value="Regulation of TLR by endogenous ligand"/>
</dbReference>
<dbReference type="Reactome" id="R-HSA-9705671">
    <property type="pathway name" value="SARS-CoV-2 activates/modulates innate and adaptive immune responses"/>
</dbReference>
<dbReference type="SignaLink" id="Q15399"/>
<dbReference type="BioGRID-ORCS" id="7096">
    <property type="hits" value="12 hits in 1153 CRISPR screens"/>
</dbReference>
<dbReference type="EvolutionaryTrace" id="Q15399"/>
<dbReference type="GeneWiki" id="TLR_1"/>
<dbReference type="GenomeRNAi" id="7096"/>
<dbReference type="Pharos" id="Q15399">
    <property type="development level" value="Tbio"/>
</dbReference>
<dbReference type="PRO" id="PR:Q15399"/>
<dbReference type="Proteomes" id="UP000005640">
    <property type="component" value="Chromosome 4"/>
</dbReference>
<dbReference type="RNAct" id="Q15399">
    <property type="molecule type" value="protein"/>
</dbReference>
<dbReference type="Bgee" id="ENSG00000174125">
    <property type="expression patterns" value="Expressed in monocyte and 144 other cell types or tissues"/>
</dbReference>
<dbReference type="ExpressionAtlas" id="Q15399">
    <property type="expression patterns" value="baseline and differential"/>
</dbReference>
<dbReference type="GO" id="GO:0005794">
    <property type="term" value="C:Golgi apparatus"/>
    <property type="evidence" value="ECO:0000314"/>
    <property type="project" value="UniProtKB"/>
</dbReference>
<dbReference type="GO" id="GO:0016020">
    <property type="term" value="C:membrane"/>
    <property type="evidence" value="ECO:0000303"/>
    <property type="project" value="UniProtKB"/>
</dbReference>
<dbReference type="GO" id="GO:0045121">
    <property type="term" value="C:membrane raft"/>
    <property type="evidence" value="ECO:0000314"/>
    <property type="project" value="UniProtKB"/>
</dbReference>
<dbReference type="GO" id="GO:0030670">
    <property type="term" value="C:phagocytic vesicle membrane"/>
    <property type="evidence" value="ECO:0007669"/>
    <property type="project" value="UniProtKB-SubCell"/>
</dbReference>
<dbReference type="GO" id="GO:0005886">
    <property type="term" value="C:plasma membrane"/>
    <property type="evidence" value="ECO:0000318"/>
    <property type="project" value="GO_Central"/>
</dbReference>
<dbReference type="GO" id="GO:0043235">
    <property type="term" value="C:receptor complex"/>
    <property type="evidence" value="ECO:0000353"/>
    <property type="project" value="ComplexPortal"/>
</dbReference>
<dbReference type="GO" id="GO:0035354">
    <property type="term" value="C:Toll-like receptor 1-Toll-like receptor 2 protein complex"/>
    <property type="evidence" value="ECO:0000314"/>
    <property type="project" value="MGI"/>
</dbReference>
<dbReference type="GO" id="GO:0042802">
    <property type="term" value="F:identical protein binding"/>
    <property type="evidence" value="ECO:0000353"/>
    <property type="project" value="IntAct"/>
</dbReference>
<dbReference type="GO" id="GO:0071723">
    <property type="term" value="F:lipopeptide binding"/>
    <property type="evidence" value="ECO:0000318"/>
    <property type="project" value="GO_Central"/>
</dbReference>
<dbReference type="GO" id="GO:0061809">
    <property type="term" value="F:NAD+ nucleosidase activity, cyclic ADP-ribose generating"/>
    <property type="evidence" value="ECO:0007669"/>
    <property type="project" value="UniProtKB-EC"/>
</dbReference>
<dbReference type="GO" id="GO:0038023">
    <property type="term" value="F:signaling receptor activity"/>
    <property type="evidence" value="ECO:0000318"/>
    <property type="project" value="GO_Central"/>
</dbReference>
<dbReference type="GO" id="GO:0035663">
    <property type="term" value="F:Toll-like receptor 2 binding"/>
    <property type="evidence" value="ECO:0000353"/>
    <property type="project" value="UniProtKB"/>
</dbReference>
<dbReference type="GO" id="GO:0004888">
    <property type="term" value="F:transmembrane signaling receptor activity"/>
    <property type="evidence" value="ECO:0000303"/>
    <property type="project" value="UniProtKB"/>
</dbReference>
<dbReference type="GO" id="GO:0071727">
    <property type="term" value="P:cellular response to triacyl bacterial lipopeptide"/>
    <property type="evidence" value="ECO:0000314"/>
    <property type="project" value="UniProtKB"/>
</dbReference>
<dbReference type="GO" id="GO:0042495">
    <property type="term" value="P:detection of triacyl bacterial lipopeptide"/>
    <property type="evidence" value="ECO:0000314"/>
    <property type="project" value="MGI"/>
</dbReference>
<dbReference type="GO" id="GO:0006955">
    <property type="term" value="P:immune response"/>
    <property type="evidence" value="ECO:0000304"/>
    <property type="project" value="ProtInc"/>
</dbReference>
<dbReference type="GO" id="GO:0006954">
    <property type="term" value="P:inflammatory response"/>
    <property type="evidence" value="ECO:0000318"/>
    <property type="project" value="GO_Central"/>
</dbReference>
<dbReference type="GO" id="GO:0045087">
    <property type="term" value="P:innate immune response"/>
    <property type="evidence" value="ECO:0000303"/>
    <property type="project" value="ComplexPortal"/>
</dbReference>
<dbReference type="GO" id="GO:0042116">
    <property type="term" value="P:macrophage activation"/>
    <property type="evidence" value="ECO:0000303"/>
    <property type="project" value="UniProtKB"/>
</dbReference>
<dbReference type="GO" id="GO:0001774">
    <property type="term" value="P:microglial cell activation"/>
    <property type="evidence" value="ECO:0007669"/>
    <property type="project" value="Ensembl"/>
</dbReference>
<dbReference type="GO" id="GO:0032755">
    <property type="term" value="P:positive regulation of interleukin-6 production"/>
    <property type="evidence" value="ECO:0000250"/>
    <property type="project" value="UniProtKB"/>
</dbReference>
<dbReference type="GO" id="GO:0032757">
    <property type="term" value="P:positive regulation of interleukin-8 production"/>
    <property type="evidence" value="ECO:0000316"/>
    <property type="project" value="ARUK-UCL"/>
</dbReference>
<dbReference type="GO" id="GO:0034137">
    <property type="term" value="P:positive regulation of toll-like receptor 2 signaling pathway"/>
    <property type="evidence" value="ECO:0000316"/>
    <property type="project" value="ARUK-UCL"/>
</dbReference>
<dbReference type="GO" id="GO:0032760">
    <property type="term" value="P:positive regulation of tumor necrosis factor production"/>
    <property type="evidence" value="ECO:0000250"/>
    <property type="project" value="UniProtKB"/>
</dbReference>
<dbReference type="GO" id="GO:0007165">
    <property type="term" value="P:signal transduction"/>
    <property type="evidence" value="ECO:0000304"/>
    <property type="project" value="ProtInc"/>
</dbReference>
<dbReference type="GO" id="GO:0002224">
    <property type="term" value="P:toll-like receptor signaling pathway"/>
    <property type="evidence" value="ECO:0000314"/>
    <property type="project" value="ComplexPortal"/>
</dbReference>
<dbReference type="FunFam" id="3.40.50.10140:FF:000001">
    <property type="entry name" value="Toll-like receptor 2"/>
    <property type="match status" value="1"/>
</dbReference>
<dbReference type="FunFam" id="3.80.10.10:FF:000046">
    <property type="entry name" value="Toll-like receptor 2"/>
    <property type="match status" value="1"/>
</dbReference>
<dbReference type="Gene3D" id="3.80.10.10">
    <property type="entry name" value="Ribonuclease Inhibitor"/>
    <property type="match status" value="1"/>
</dbReference>
<dbReference type="Gene3D" id="3.40.50.10140">
    <property type="entry name" value="Toll/interleukin-1 receptor homology (TIR) domain"/>
    <property type="match status" value="1"/>
</dbReference>
<dbReference type="InterPro" id="IPR000483">
    <property type="entry name" value="Cys-rich_flank_reg_C"/>
</dbReference>
<dbReference type="InterPro" id="IPR001611">
    <property type="entry name" value="Leu-rich_rpt"/>
</dbReference>
<dbReference type="InterPro" id="IPR003591">
    <property type="entry name" value="Leu-rich_rpt_typical-subtyp"/>
</dbReference>
<dbReference type="InterPro" id="IPR032675">
    <property type="entry name" value="LRR_dom_sf"/>
</dbReference>
<dbReference type="InterPro" id="IPR000157">
    <property type="entry name" value="TIR_dom"/>
</dbReference>
<dbReference type="InterPro" id="IPR017241">
    <property type="entry name" value="Toll-like_receptor"/>
</dbReference>
<dbReference type="InterPro" id="IPR035897">
    <property type="entry name" value="Toll_tir_struct_dom_sf"/>
</dbReference>
<dbReference type="PANTHER" id="PTHR24365">
    <property type="entry name" value="TOLL-LIKE RECEPTOR"/>
    <property type="match status" value="1"/>
</dbReference>
<dbReference type="PANTHER" id="PTHR24365:SF261">
    <property type="entry name" value="TOLL-LIKE RECEPTOR 1"/>
    <property type="match status" value="1"/>
</dbReference>
<dbReference type="Pfam" id="PF13855">
    <property type="entry name" value="LRR_8"/>
    <property type="match status" value="2"/>
</dbReference>
<dbReference type="Pfam" id="PF01463">
    <property type="entry name" value="LRRCT"/>
    <property type="match status" value="1"/>
</dbReference>
<dbReference type="Pfam" id="PF01582">
    <property type="entry name" value="TIR"/>
    <property type="match status" value="1"/>
</dbReference>
<dbReference type="PIRSF" id="PIRSF037595">
    <property type="entry name" value="Toll-like_receptor"/>
    <property type="match status" value="1"/>
</dbReference>
<dbReference type="PRINTS" id="PR01537">
    <property type="entry name" value="INTRLKN1R1F"/>
</dbReference>
<dbReference type="SMART" id="SM00364">
    <property type="entry name" value="LRR_BAC"/>
    <property type="match status" value="3"/>
</dbReference>
<dbReference type="SMART" id="SM00369">
    <property type="entry name" value="LRR_TYP"/>
    <property type="match status" value="4"/>
</dbReference>
<dbReference type="SMART" id="SM00082">
    <property type="entry name" value="LRRCT"/>
    <property type="match status" value="1"/>
</dbReference>
<dbReference type="SMART" id="SM00255">
    <property type="entry name" value="TIR"/>
    <property type="match status" value="1"/>
</dbReference>
<dbReference type="SUPFAM" id="SSF52058">
    <property type="entry name" value="L domain-like"/>
    <property type="match status" value="1"/>
</dbReference>
<dbReference type="SUPFAM" id="SSF52200">
    <property type="entry name" value="Toll/Interleukin receptor TIR domain"/>
    <property type="match status" value="1"/>
</dbReference>
<dbReference type="PROSITE" id="PS51450">
    <property type="entry name" value="LRR"/>
    <property type="match status" value="10"/>
</dbReference>
<dbReference type="PROSITE" id="PS50104">
    <property type="entry name" value="TIR"/>
    <property type="match status" value="1"/>
</dbReference>
<reference key="1">
    <citation type="journal article" date="1998" name="Proc. Natl. Acad. Sci. U.S.A.">
        <title>A family of human receptors structurally related to Drosophila Toll.</title>
        <authorList>
            <person name="Rock F.L."/>
            <person name="Hardiman G."/>
            <person name="Timans J.C."/>
            <person name="Kastelein R.A."/>
            <person name="Bazan J.F."/>
        </authorList>
    </citation>
    <scope>NUCLEOTIDE SEQUENCE [MRNA]</scope>
    <scope>VARIANTS SER-248 AND ILE-602</scope>
    <source>
        <tissue>Erythroleukemia</tissue>
    </source>
</reference>
<reference key="2">
    <citation type="journal article" date="2008" name="Immunogenetics">
        <title>Natural selection in the TLR-related genes in the course of primate evolution.</title>
        <authorList>
            <person name="Nakajima T."/>
            <person name="Ohtani H."/>
            <person name="Satta Y."/>
            <person name="Uno Y."/>
            <person name="Akari H."/>
            <person name="Ishida T."/>
            <person name="Kimura A."/>
        </authorList>
    </citation>
    <scope>NUCLEOTIDE SEQUENCE [MRNA]</scope>
</reference>
<reference key="3">
    <citation type="journal article" date="2009" name="PLoS ONE">
        <title>The heterogeneous allelic repertoire of human Toll-Like receptor (TLR) genes.</title>
        <authorList>
            <person name="Georgel P."/>
            <person name="Macquin C."/>
            <person name="Bahram S."/>
        </authorList>
    </citation>
    <scope>NUCLEOTIDE SEQUENCE [MRNA]</scope>
    <scope>VARIANTS THR-80 AND ILE-602</scope>
</reference>
<reference key="4">
    <citation type="journal article" date="1994" name="DNA Res.">
        <title>Prediction of the coding sequences of unidentified human genes. I. The coding sequences of 40 new genes (KIAA0001-KIAA0040) deduced by analysis of randomly sampled cDNA clones from human immature myeloid cell line KG-1.</title>
        <authorList>
            <person name="Nomura N."/>
            <person name="Miyajima N."/>
            <person name="Sazuka T."/>
            <person name="Tanaka A."/>
            <person name="Kawarabayasi Y."/>
            <person name="Sato S."/>
            <person name="Nagase T."/>
            <person name="Seki N."/>
            <person name="Ishikawa K."/>
            <person name="Tabata S."/>
        </authorList>
    </citation>
    <scope>NUCLEOTIDE SEQUENCE [LARGE SCALE MRNA]</scope>
    <scope>VARIANT THR-80</scope>
    <source>
        <tissue>Bone marrow</tissue>
    </source>
</reference>
<reference key="5">
    <citation type="journal article" date="2001" name="Genome Res.">
        <title>Towards a catalog of human genes and proteins: sequencing and analysis of 500 novel complete protein coding human cDNAs.</title>
        <authorList>
            <person name="Wiemann S."/>
            <person name="Weil B."/>
            <person name="Wellenreuther R."/>
            <person name="Gassenhuber J."/>
            <person name="Glassl S."/>
            <person name="Ansorge W."/>
            <person name="Boecher M."/>
            <person name="Bloecker H."/>
            <person name="Bauersachs S."/>
            <person name="Blum H."/>
            <person name="Lauber J."/>
            <person name="Duesterhoeft A."/>
            <person name="Beyer A."/>
            <person name="Koehrer K."/>
            <person name="Strack N."/>
            <person name="Mewes H.-W."/>
            <person name="Ottenwaelder B."/>
            <person name="Obermaier B."/>
            <person name="Tampe J."/>
            <person name="Heubner D."/>
            <person name="Wambutt R."/>
            <person name="Korn B."/>
            <person name="Klein M."/>
            <person name="Poustka A."/>
        </authorList>
    </citation>
    <scope>NUCLEOTIDE SEQUENCE [LARGE SCALE MRNA]</scope>
    <scope>VARIANTS SER-248 AND ILE-602</scope>
    <source>
        <tissue>Brain</tissue>
    </source>
</reference>
<reference key="6">
    <citation type="journal article" date="2004" name="Genome Res.">
        <title>The status, quality, and expansion of the NIH full-length cDNA project: the Mammalian Gene Collection (MGC).</title>
        <authorList>
            <consortium name="The MGC Project Team"/>
        </authorList>
    </citation>
    <scope>NUCLEOTIDE SEQUENCE [LARGE SCALE MRNA]</scope>
    <scope>VARIANTS SER-248 AND ILE-602</scope>
</reference>
<reference key="7">
    <citation type="journal article" date="2004" name="Protein Sci.">
        <title>Signal peptide prediction based on analysis of experimentally verified cleavage sites.</title>
        <authorList>
            <person name="Zhang Z."/>
            <person name="Henzel W.J."/>
        </authorList>
    </citation>
    <scope>PROTEIN SEQUENCE OF 25-39</scope>
</reference>
<reference key="8">
    <citation type="journal article" date="2006" name="J. Biol. Chem.">
        <title>Membrane sorting of toll-like receptor (TLR)-2/6 and TLR2/1 heterodimers at the cell surface determines heterotypic associations with CD36 and intracellular targeting.</title>
        <authorList>
            <person name="Triantafilou M."/>
            <person name="Gamper F.G."/>
            <person name="Haston R.M."/>
            <person name="Mouratis M.A."/>
            <person name="Morath S."/>
            <person name="Hartung T."/>
            <person name="Triantafilou K."/>
        </authorList>
    </citation>
    <scope>FUNCTION</scope>
    <scope>SUBCELLULAR LOCATION</scope>
    <scope>INTERACTION WITH TLR2 AND CD14</scope>
</reference>
<reference key="9">
    <citation type="journal article" date="2007" name="J. Immunol.">
        <title>Cutting edge: A common polymorphism impairs cell surface trafficking and functional responses of TLR1 but protects against leprosy.</title>
        <authorList>
            <person name="Johnson C.M."/>
            <person name="Lyle E.A."/>
            <person name="Omueti K.O."/>
            <person name="Stepensky V.A."/>
            <person name="Yegin O."/>
            <person name="Alpsoy E."/>
            <person name="Hamann L."/>
            <person name="Schumann R.R."/>
            <person name="Tapping R.I."/>
        </authorList>
    </citation>
    <scope>INVOLVEMENT IN PROTECTION AGAINST LEPROSY</scope>
</reference>
<reference key="10">
    <citation type="journal article" date="2009" name="J. Proteome Res.">
        <title>Glycoproteomics analysis of human liver tissue by combination of multiple enzyme digestion and hydrazide chemistry.</title>
        <authorList>
            <person name="Chen R."/>
            <person name="Jiang X."/>
            <person name="Sun D."/>
            <person name="Han G."/>
            <person name="Wang F."/>
            <person name="Ye M."/>
            <person name="Wang L."/>
            <person name="Zou H."/>
        </authorList>
    </citation>
    <scope>GLYCOSYLATION [LARGE SCALE ANALYSIS] AT ASN-163</scope>
    <source>
        <tissue>Liver</tissue>
    </source>
</reference>
<reference key="11">
    <citation type="journal article" date="2011" name="Infect. Immun.">
        <title>Mycobacterium tuberculosis lipoproteins directly regulate human memory CD4(+) T cell activation via Toll-like receptors 1 and 2.</title>
        <authorList>
            <person name="Lancioni C.L."/>
            <person name="Li Q."/>
            <person name="Thomas J.J."/>
            <person name="Ding X."/>
            <person name="Thiel B."/>
            <person name="Drage M.G."/>
            <person name="Pecora N.D."/>
            <person name="Ziady A.G."/>
            <person name="Shank S."/>
            <person name="Harding C.V."/>
            <person name="Boom W.H."/>
            <person name="Rojas R.E."/>
        </authorList>
    </citation>
    <scope>FUNCTION</scope>
    <source>
        <tissue>T-cell</tissue>
    </source>
</reference>
<reference evidence="17" key="12">
    <citation type="journal article" date="2024" name="EMBO J.">
        <title>A mosquito salivary protein-driven influx of myeloid cells facilitates flavivirus transmission.</title>
        <authorList>
            <person name="Wang Z."/>
            <person name="Nie K."/>
            <person name="Liang Y."/>
            <person name="Niu J."/>
            <person name="Yu X."/>
            <person name="Zhang O."/>
            <person name="Liu L."/>
            <person name="Shi X."/>
            <person name="Wang Y."/>
            <person name="Feng X."/>
            <person name="Zhu Y."/>
            <person name="Wang P."/>
            <person name="Cheng G."/>
        </authorList>
    </citation>
    <scope>INTERACTION WITH MOSQUITO NEUTROPHIL RECRUITMENT PROTEIN</scope>
</reference>
<reference key="13">
    <citation type="journal article" date="2000" name="Nature">
        <title>Structural basis for signal transduction by the Toll/interleukin-1 receptor domains.</title>
        <authorList>
            <person name="Xu Y."/>
            <person name="Tao X."/>
            <person name="Shen B."/>
            <person name="Horng T."/>
            <person name="Medzhitov R."/>
            <person name="Manley J.L."/>
            <person name="Tong L."/>
        </authorList>
    </citation>
    <scope>X-RAY CRYSTALLOGRAPHY (2.9 ANGSTROMS) OF 625-785</scope>
</reference>
<reference key="14">
    <citation type="journal article" date="2007" name="Cell">
        <title>Crystal structure of the TLR1-TLR2 heterodimer induced by binding of a tri-acylated lipopeptide.</title>
        <authorList>
            <person name="Jin M.S."/>
            <person name="Kim S.E."/>
            <person name="Heo J.Y."/>
            <person name="Lee M.E."/>
            <person name="Kim H.M."/>
            <person name="Paik S.-G."/>
            <person name="Lee H."/>
            <person name="Lee J.-O."/>
        </authorList>
    </citation>
    <scope>X-RAY CRYSTALLOGRAPHY (2.1 ANGSTROMS) OF 25-476 IN COMPLEX WITH TLR2 AND BACTERIAL LIPOPEPTIDE ANALOG</scope>
    <scope>DISULFIDE BONDS</scope>
    <scope>GLYCOSYLATION AT ASN-51; ASN-163; ASN-330 AND ASN-429</scope>
</reference>
<reference key="15">
    <citation type="journal article" date="2009" name="J. Infect. Dis.">
        <title>Polymorphism N248S in the human Toll-like receptor 1 gene is related to leprosy and leprosy reactions.</title>
        <authorList>
            <person name="Schuring R.P."/>
            <person name="Hamann L."/>
            <person name="Faber W.R."/>
            <person name="Pahan D."/>
            <person name="Richardus J.H."/>
            <person name="Schumann R.R."/>
            <person name="Oskam L."/>
        </authorList>
    </citation>
    <scope>ASSOCIATION OF VARIANT SER-248 WITH SUSCEPTIBILITY TO LEPROSY</scope>
</reference>
<reference key="16">
    <citation type="journal article" date="2011" name="Hum. Mutat.">
        <title>Functional characterization of naturally occurring genetic variants in the human TLR1-2-6 gene family.</title>
        <authorList>
            <person name="Ben-Ali M."/>
            <person name="Corre B."/>
            <person name="Manry J."/>
            <person name="Barreiro L.B."/>
            <person name="Quach H."/>
            <person name="Boniotto M."/>
            <person name="Pellegrini S."/>
            <person name="Quintana-Murci L."/>
        </authorList>
    </citation>
    <scope>VARIANTS PRO-44; THR-75; THR-80; TYR-118; SER-248; LEU-305; LEU-315; ASN-352; VAL-460; ALA-542; CYS-554; GLY-587; ILE-602; ALA-651; ALA-674; PRO-720 AND LEU-733</scope>
    <scope>CHARACTERIZATION OF VARIANTS LEU-315; CYS-554; ILE-602; ALA-651 AND PRO-720</scope>
</reference>
<gene>
    <name type="primary">TLR1</name>
    <name type="synonym">KIAA0012</name>
</gene>
<name>TLR1_HUMAN</name>
<keyword id="KW-0002">3D-structure</keyword>
<keyword id="KW-1003">Cell membrane</keyword>
<keyword id="KW-0968">Cytoplasmic vesicle</keyword>
<keyword id="KW-0903">Direct protein sequencing</keyword>
<keyword id="KW-1015">Disulfide bond</keyword>
<keyword id="KW-0325">Glycoprotein</keyword>
<keyword id="KW-0333">Golgi apparatus</keyword>
<keyword id="KW-0391">Immunity</keyword>
<keyword id="KW-0395">Inflammatory response</keyword>
<keyword id="KW-0399">Innate immunity</keyword>
<keyword id="KW-0433">Leucine-rich repeat</keyword>
<keyword id="KW-0472">Membrane</keyword>
<keyword id="KW-0520">NAD</keyword>
<keyword id="KW-1267">Proteomics identification</keyword>
<keyword id="KW-0675">Receptor</keyword>
<keyword id="KW-1185">Reference proteome</keyword>
<keyword id="KW-0677">Repeat</keyword>
<keyword id="KW-0732">Signal</keyword>
<keyword id="KW-0812">Transmembrane</keyword>
<keyword id="KW-1133">Transmembrane helix</keyword>
<proteinExistence type="evidence at protein level"/>
<comment type="function">
    <text evidence="8 12">Participates in the innate immune response to microbial agents. Specifically recognizes diacylated and triacylated lipopeptides. Cooperates with TLR2 to mediate the innate immune response to bacterial lipoproteins or lipopeptides (PubMed:21078852). Forms the activation cluster TLR2:TLR1:CD14 in response to triacylated lipopeptides, this cluster triggers signaling from the cell surface and subsequently is targeted to the Golgi in a lipid-raft dependent pathway (PubMed:16880211). Acts via MYD88 and TRAF6, leading to NF-kappa-B activation, cytokine secretion and the inflammatory response.</text>
</comment>
<comment type="subunit">
    <text evidence="2 8 9 14">Interacts (via extracellular domain) with TLR2. TLR2 seems to exist in heterodimers with either TLR1 or TLR6 before stimulation by the ligand. The heterodimers form bigger oligomers in response to their corresponding ligands as well as further heterotypic associations with other receptors such as CD14 and/or CD36 (PubMed:16880211, PubMed:17889651). The activation cluster TLR2:TLR1:CD14 forms in response to triacylated lipopeptides (PubMed:16880211). Binds MYD88 (via TIR domain). Interacts with CNPY3 (By similarity). Interacts with neutrophil recruitment protein from Aedes aegypti saliva; the interaction probably promotes activation of canonical NF-kappa-B signaling in skin-resident macrophages and subsequent expression of neutrophil chemoattractants (PubMed:38378891).</text>
</comment>
<comment type="interaction">
    <interactant intactId="EBI-9009517">
        <id>Q15399</id>
    </interactant>
    <interactant intactId="EBI-9009517">
        <id>Q15399</id>
        <label>TLR1</label>
    </interactant>
    <organismsDiffer>false</organismsDiffer>
    <experiments>3</experiments>
</comment>
<comment type="interaction">
    <interactant intactId="EBI-9009517">
        <id>Q15399</id>
    </interactant>
    <interactant intactId="EBI-16825459">
        <id>Q9BXR5</id>
        <label>TLR10</label>
    </interactant>
    <organismsDiffer>false</organismsDiffer>
    <experiments>3</experiments>
</comment>
<comment type="interaction">
    <interactant intactId="EBI-9009517">
        <id>Q15399</id>
    </interactant>
    <interactant intactId="EBI-973722">
        <id>O60603</id>
        <label>TLR2</label>
    </interactant>
    <organismsDiffer>false</organismsDiffer>
    <experiments>3</experiments>
</comment>
<comment type="interaction">
    <interactant intactId="EBI-9009517">
        <id>Q15399</id>
    </interactant>
    <interactant intactId="EBI-13940779">
        <id>Q9Y2C9</id>
        <label>TLR6</label>
    </interactant>
    <organismsDiffer>false</organismsDiffer>
    <experiments>3</experiments>
</comment>
<comment type="subcellular location">
    <subcellularLocation>
        <location evidence="8">Cell membrane</location>
        <topology evidence="3">Single-pass type I membrane protein</topology>
    </subcellularLocation>
    <subcellularLocation>
        <location evidence="2">Cytoplasmic vesicle</location>
        <location evidence="2">Phagosome membrane</location>
        <topology evidence="3">Single-pass type I membrane protein</topology>
    </subcellularLocation>
    <subcellularLocation>
        <location evidence="8">Membrane raft</location>
    </subcellularLocation>
    <subcellularLocation>
        <location evidence="8">Golgi apparatus</location>
    </subcellularLocation>
    <text evidence="8">Does not reside in lipid rafts before stimulation but accumulates increasingly in the raft upon the presence of the microbial ligand. In response to triacylated lipoproteins, TLR2:TLR1 heterodimers are recruited in lipid rafts, this recruitment determine the intracellular targeting to the Golgi apparatus.</text>
</comment>
<comment type="tissue specificity">
    <text>Ubiquitous. Highly expressed in spleen, ovary, peripheral blood leukocytes, thymus and small intestine.</text>
</comment>
<comment type="polymorphism">
    <text>Genetic variations in TLR1 may influence susceptibility to or protection against contracting leprosy and define the leprosy susceptibility locus 5 [MIM:613223]. Ser-602 is a common allele in Caucasians. It is associated with impaired cell surface expression and receptor function resulting in protection against leprosy.</text>
</comment>
<comment type="similarity">
    <text evidence="17">Belongs to the Toll-like receptor family.</text>
</comment>
<comment type="caution">
    <text evidence="1 17">In some plant proteins and in human SARM1, the TIR domain has NAD(+) hydrolase (NADase) activity (By similarity). However, despite the presence of the catalytic Asp residue, the isolated TIR domain of human TLR4 lacks NADase activity (By similarity). Based on this, it is unlikely that Toll-like receptors have NADase activity.</text>
</comment>
<comment type="sequence caution" evidence="17">
    <conflict type="erroneous initiation">
        <sequence resource="EMBL-CDS" id="BAA02801"/>
    </conflict>
    <text>Extended N-terminus.</text>
</comment>
<evidence type="ECO:0000250" key="1">
    <source>
        <dbReference type="UniProtKB" id="O00206"/>
    </source>
</evidence>
<evidence type="ECO:0000250" key="2">
    <source>
        <dbReference type="UniProtKB" id="Q9EPQ1"/>
    </source>
</evidence>
<evidence type="ECO:0000255" key="3"/>
<evidence type="ECO:0000255" key="4">
    <source>
        <dbReference type="PROSITE-ProRule" id="PRU00204"/>
    </source>
</evidence>
<evidence type="ECO:0000269" key="5">
    <source>
    </source>
</evidence>
<evidence type="ECO:0000269" key="6">
    <source>
    </source>
</evidence>
<evidence type="ECO:0000269" key="7">
    <source>
    </source>
</evidence>
<evidence type="ECO:0000269" key="8">
    <source>
    </source>
</evidence>
<evidence type="ECO:0000269" key="9">
    <source>
    </source>
</evidence>
<evidence type="ECO:0000269" key="10">
    <source>
    </source>
</evidence>
<evidence type="ECO:0000269" key="11">
    <source>
    </source>
</evidence>
<evidence type="ECO:0000269" key="12">
    <source>
    </source>
</evidence>
<evidence type="ECO:0000269" key="13">
    <source>
    </source>
</evidence>
<evidence type="ECO:0000269" key="14">
    <source>
    </source>
</evidence>
<evidence type="ECO:0000269" key="15">
    <source>
    </source>
</evidence>
<evidence type="ECO:0000269" key="16">
    <source>
    </source>
</evidence>
<evidence type="ECO:0000305" key="17"/>
<evidence type="ECO:0007829" key="18">
    <source>
        <dbReference type="PDB" id="2Z7X"/>
    </source>
</evidence>
<evidence type="ECO:0007829" key="19">
    <source>
        <dbReference type="PDB" id="6NIH"/>
    </source>
</evidence>
<evidence type="ECO:0007829" key="20">
    <source>
        <dbReference type="PDB" id="7NT7"/>
    </source>
</evidence>
<evidence type="ECO:0007829" key="21">
    <source>
        <dbReference type="PDB" id="7NUW"/>
    </source>
</evidence>
<protein>
    <recommendedName>
        <fullName>Toll-like receptor 1</fullName>
    </recommendedName>
    <alternativeName>
        <fullName>Toll/interleukin-1 receptor-like protein</fullName>
        <shortName>TIL</shortName>
    </alternativeName>
    <cdAntigenName>CD281</cdAntigenName>
</protein>
<organism>
    <name type="scientific">Homo sapiens</name>
    <name type="common">Human</name>
    <dbReference type="NCBI Taxonomy" id="9606"/>
    <lineage>
        <taxon>Eukaryota</taxon>
        <taxon>Metazoa</taxon>
        <taxon>Chordata</taxon>
        <taxon>Craniata</taxon>
        <taxon>Vertebrata</taxon>
        <taxon>Euteleostomi</taxon>
        <taxon>Mammalia</taxon>
        <taxon>Eutheria</taxon>
        <taxon>Euarchontoglires</taxon>
        <taxon>Primates</taxon>
        <taxon>Haplorrhini</taxon>
        <taxon>Catarrhini</taxon>
        <taxon>Hominidae</taxon>
        <taxon>Homo</taxon>
    </lineage>
</organism>
<feature type="signal peptide" evidence="6">
    <location>
        <begin position="1"/>
        <end position="24"/>
    </location>
</feature>
<feature type="chain" id="PRO_0000034705" description="Toll-like receptor 1">
    <location>
        <begin position="25"/>
        <end position="786"/>
    </location>
</feature>
<feature type="topological domain" description="Extracellular" evidence="3">
    <location>
        <begin position="25"/>
        <end position="580"/>
    </location>
</feature>
<feature type="transmembrane region" description="Helical" evidence="3">
    <location>
        <begin position="581"/>
        <end position="601"/>
    </location>
</feature>
<feature type="topological domain" description="Cytoplasmic" evidence="3">
    <location>
        <begin position="602"/>
        <end position="786"/>
    </location>
</feature>
<feature type="repeat" description="LRR 1">
    <location>
        <begin position="54"/>
        <end position="77"/>
    </location>
</feature>
<feature type="repeat" description="LRR 2">
    <location>
        <begin position="78"/>
        <end position="101"/>
    </location>
</feature>
<feature type="repeat" description="LRR 3">
    <location>
        <begin position="102"/>
        <end position="125"/>
    </location>
</feature>
<feature type="repeat" description="LRR 4">
    <location>
        <begin position="126"/>
        <end position="150"/>
    </location>
</feature>
<feature type="repeat" description="LRR 5">
    <location>
        <begin position="151"/>
        <end position="175"/>
    </location>
</feature>
<feature type="repeat" description="LRR 6">
    <location>
        <begin position="176"/>
        <end position="199"/>
    </location>
</feature>
<feature type="repeat" description="LRR 7">
    <location>
        <begin position="200"/>
        <end position="223"/>
    </location>
</feature>
<feature type="repeat" description="LRR 8">
    <location>
        <begin position="224"/>
        <end position="250"/>
    </location>
</feature>
<feature type="repeat" description="LRR 9">
    <location>
        <begin position="251"/>
        <end position="278"/>
    </location>
</feature>
<feature type="repeat" description="LRR 10">
    <location>
        <begin position="279"/>
        <end position="308"/>
    </location>
</feature>
<feature type="repeat" description="LRR 11">
    <location>
        <begin position="309"/>
        <end position="337"/>
    </location>
</feature>
<feature type="repeat" description="LRR 12">
    <location>
        <begin position="338"/>
        <end position="361"/>
    </location>
</feature>
<feature type="repeat" description="LRR 13">
    <location>
        <begin position="362"/>
        <end position="388"/>
    </location>
</feature>
<feature type="repeat" description="LRR 14">
    <location>
        <begin position="389"/>
        <end position="414"/>
    </location>
</feature>
<feature type="repeat" description="LRR 15">
    <location>
        <begin position="415"/>
        <end position="437"/>
    </location>
</feature>
<feature type="repeat" description="LRR 16">
    <location>
        <begin position="438"/>
        <end position="457"/>
    </location>
</feature>
<feature type="repeat" description="LRR 17">
    <location>
        <begin position="458"/>
        <end position="478"/>
    </location>
</feature>
<feature type="repeat" description="LRR 18">
    <location>
        <begin position="479"/>
        <end position="500"/>
    </location>
</feature>
<feature type="repeat" description="LRR 19">
    <location>
        <begin position="501"/>
        <end position="524"/>
    </location>
</feature>
<feature type="domain" description="LRRCT">
    <location>
        <begin position="525"/>
        <end position="579"/>
    </location>
</feature>
<feature type="domain" description="TIR" evidence="4">
    <location>
        <begin position="635"/>
        <end position="776"/>
    </location>
</feature>
<feature type="region of interest" description="Interaction with bacterial lipopeptide">
    <location>
        <begin position="313"/>
        <end position="316"/>
    </location>
</feature>
<feature type="glycosylation site" description="N-linked (GlcNAc...) asparagine" evidence="9">
    <location>
        <position position="51"/>
    </location>
</feature>
<feature type="glycosylation site" description="N-linked (GlcNAc...) asparagine" evidence="3">
    <location>
        <position position="137"/>
    </location>
</feature>
<feature type="glycosylation site" description="N-linked (GlcNAc...) asparagine" evidence="9 10">
    <location>
        <position position="163"/>
    </location>
</feature>
<feature type="glycosylation site" description="N-linked (GlcNAc...) asparagine" evidence="9">
    <location>
        <position position="330"/>
    </location>
</feature>
<feature type="glycosylation site" description="N-linked (GlcNAc...) asparagine" evidence="9">
    <location>
        <position position="429"/>
    </location>
</feature>
<feature type="glycosylation site" description="N-linked (GlcNAc...) asparagine" evidence="3">
    <location>
        <position position="578"/>
    </location>
</feature>
<feature type="disulfide bond" evidence="9">
    <location>
        <begin position="110"/>
        <end position="132"/>
    </location>
</feature>
<feature type="disulfide bond" evidence="9">
    <location>
        <begin position="223"/>
        <end position="230"/>
    </location>
</feature>
<feature type="disulfide bond" evidence="9">
    <location>
        <begin position="343"/>
        <end position="368"/>
    </location>
</feature>
<feature type="disulfide bond" evidence="9">
    <location>
        <begin position="419"/>
        <end position="442"/>
    </location>
</feature>
<feature type="sequence variant" id="VAR_066340" description="In dbSNP:rs76600635." evidence="13">
    <original>S</original>
    <variation>P</variation>
    <location>
        <position position="44"/>
    </location>
</feature>
<feature type="sequence variant" id="VAR_066341" description="In dbSNP:rs137853170." evidence="13">
    <original>I</original>
    <variation>T</variation>
    <location>
        <position position="75"/>
    </location>
</feature>
<feature type="sequence variant" id="VAR_031916" description="In dbSNP:rs5743611." evidence="11 13 15">
    <original>R</original>
    <variation>T</variation>
    <location>
        <position position="80"/>
    </location>
</feature>
<feature type="sequence variant" id="VAR_018474" description="In dbSNP:rs5743612." evidence="13">
    <original>H</original>
    <variation>Y</variation>
    <location>
        <position position="118"/>
    </location>
</feature>
<feature type="sequence variant" id="VAR_031917" description="May confer susceptibility to leprosy; dbSNP:rs4833095." evidence="5 7 13 16">
    <original>N</original>
    <variation>S</variation>
    <location>
        <position position="248"/>
    </location>
</feature>
<feature type="sequence variant" id="VAR_031918" description="In dbSNP:rs3923647." evidence="13">
    <original>H</original>
    <variation>L</variation>
    <location>
        <position position="305"/>
    </location>
</feature>
<feature type="sequence variant" id="VAR_031919" description="Severe impairment of activity; dbSNP:rs5743613." evidence="13">
    <original>P</original>
    <variation>L</variation>
    <location>
        <position position="315"/>
    </location>
</feature>
<feature type="sequence variant" id="VAR_066342" description="In dbSNP:rs76796448." evidence="13">
    <original>H</original>
    <variation>N</variation>
    <location>
        <position position="352"/>
    </location>
</feature>
<feature type="sequence variant" id="VAR_066343" description="In dbSNP:rs137853171." evidence="13">
    <original>I</original>
    <variation>V</variation>
    <location>
        <position position="460"/>
    </location>
</feature>
<feature type="sequence variant" id="VAR_066344" description="In dbSNP:rs137853172." evidence="13">
    <original>V</original>
    <variation>A</variation>
    <location>
        <position position="542"/>
    </location>
</feature>
<feature type="sequence variant" id="VAR_066345" description="Severe impairment of activity; dbSNP:rs137853173." evidence="13">
    <original>Y</original>
    <variation>C</variation>
    <location>
        <position position="554"/>
    </location>
</feature>
<feature type="sequence variant" id="VAR_031920" description="In dbSNP:rs5743617." evidence="13">
    <original>V</original>
    <variation>G</variation>
    <location>
        <position position="587"/>
    </location>
</feature>
<feature type="sequence variant" id="VAR_031921" description="Severe impairment of activity; dbSNP:rs5743618." evidence="5 7 11 13 16">
    <original>S</original>
    <variation>I</variation>
    <location>
        <position position="602"/>
    </location>
</feature>
<feature type="sequence variant" id="VAR_052358" description="In dbSNP:rs5743619.">
    <original>L</original>
    <variation>R</variation>
    <location>
        <position position="631"/>
    </location>
</feature>
<feature type="sequence variant" id="VAR_066346" description="Severe impairment of activity; dbSNP:rs137853174." evidence="13">
    <original>V</original>
    <variation>A</variation>
    <location>
        <position position="651"/>
    </location>
</feature>
<feature type="sequence variant" id="VAR_066347" evidence="13">
    <original>V</original>
    <variation>A</variation>
    <location>
        <position position="674"/>
    </location>
</feature>
<feature type="sequence variant" id="VAR_066348" description="Severe impairment of activity; dbSNP:rs113706342." evidence="13">
    <original>H</original>
    <variation>P</variation>
    <location>
        <position position="720"/>
    </location>
</feature>
<feature type="sequence variant" id="VAR_052359" description="In dbSNP:rs5743621." evidence="13">
    <original>P</original>
    <variation>L</variation>
    <location>
        <position position="733"/>
    </location>
</feature>
<feature type="sequence conflict" description="In Ref. 5; CAB43364." evidence="17" ref="5">
    <original>E</original>
    <variation>G</variation>
    <location>
        <position position="182"/>
    </location>
</feature>
<feature type="sequence conflict" description="In Ref. 5; CAB43364." evidence="17" ref="5">
    <original>N</original>
    <variation>S</variation>
    <location>
        <position position="228"/>
    </location>
</feature>
<feature type="sequence conflict" description="In Ref. 5; CAB43364." evidence="17" ref="5">
    <original>F</original>
    <variation>S</variation>
    <location>
        <position position="276"/>
    </location>
</feature>
<feature type="strand" evidence="18">
    <location>
        <begin position="28"/>
        <end position="30"/>
    </location>
</feature>
<feature type="strand" evidence="18">
    <location>
        <begin position="48"/>
        <end position="51"/>
    </location>
</feature>
<feature type="helix" evidence="18">
    <location>
        <begin position="62"/>
        <end position="65"/>
    </location>
</feature>
<feature type="strand" evidence="18">
    <location>
        <begin position="73"/>
        <end position="75"/>
    </location>
</feature>
<feature type="strand" evidence="18">
    <location>
        <begin position="83"/>
        <end position="85"/>
    </location>
</feature>
<feature type="helix" evidence="18">
    <location>
        <begin position="86"/>
        <end position="89"/>
    </location>
</feature>
<feature type="strand" evidence="18">
    <location>
        <begin position="97"/>
        <end position="99"/>
    </location>
</feature>
<feature type="strand" evidence="18">
    <location>
        <begin position="107"/>
        <end position="109"/>
    </location>
</feature>
<feature type="strand" evidence="18">
    <location>
        <begin position="117"/>
        <end position="120"/>
    </location>
</feature>
<feature type="helix" evidence="18">
    <location>
        <begin position="133"/>
        <end position="137"/>
    </location>
</feature>
<feature type="strand" evidence="18">
    <location>
        <begin position="143"/>
        <end position="150"/>
    </location>
</feature>
<feature type="helix" evidence="18">
    <location>
        <begin position="153"/>
        <end position="159"/>
    </location>
</feature>
<feature type="strand" evidence="18">
    <location>
        <begin position="164"/>
        <end position="171"/>
    </location>
</feature>
<feature type="turn" evidence="19">
    <location>
        <begin position="173"/>
        <end position="178"/>
    </location>
</feature>
<feature type="helix" evidence="18">
    <location>
        <begin position="181"/>
        <end position="184"/>
    </location>
</feature>
<feature type="strand" evidence="18">
    <location>
        <begin position="189"/>
        <end position="195"/>
    </location>
</feature>
<feature type="strand" evidence="18">
    <location>
        <begin position="198"/>
        <end position="200"/>
    </location>
</feature>
<feature type="strand" evidence="18">
    <location>
        <begin position="214"/>
        <end position="218"/>
    </location>
</feature>
<feature type="strand" evidence="18">
    <location>
        <begin position="221"/>
        <end position="223"/>
    </location>
</feature>
<feature type="turn" evidence="18">
    <location>
        <begin position="227"/>
        <end position="230"/>
    </location>
</feature>
<feature type="helix" evidence="18">
    <location>
        <begin position="231"/>
        <end position="238"/>
    </location>
</feature>
<feature type="helix" evidence="18">
    <location>
        <begin position="239"/>
        <end position="242"/>
    </location>
</feature>
<feature type="strand" evidence="18">
    <location>
        <begin position="248"/>
        <end position="257"/>
    </location>
</feature>
<feature type="helix" evidence="18">
    <location>
        <begin position="258"/>
        <end position="269"/>
    </location>
</feature>
<feature type="strand" evidence="18">
    <location>
        <begin position="274"/>
        <end position="285"/>
    </location>
</feature>
<feature type="strand" evidence="18">
    <location>
        <begin position="301"/>
        <end position="309"/>
    </location>
</feature>
<feature type="helix" evidence="18">
    <location>
        <begin position="317"/>
        <end position="324"/>
    </location>
</feature>
<feature type="strand" evidence="18">
    <location>
        <begin position="329"/>
        <end position="336"/>
    </location>
</feature>
<feature type="strand" evidence="18">
    <location>
        <begin position="352"/>
        <end position="354"/>
    </location>
</feature>
<feature type="turn" evidence="18">
    <location>
        <begin position="362"/>
        <end position="367"/>
    </location>
</feature>
<feature type="strand" evidence="18">
    <location>
        <begin position="376"/>
        <end position="378"/>
    </location>
</feature>
<feature type="helix" evidence="18">
    <location>
        <begin position="387"/>
        <end position="394"/>
    </location>
</feature>
<feature type="strand" evidence="18">
    <location>
        <begin position="402"/>
        <end position="404"/>
    </location>
</feature>
<feature type="helix" evidence="18">
    <location>
        <begin position="414"/>
        <end position="416"/>
    </location>
</feature>
<feature type="strand" evidence="18">
    <location>
        <begin position="427"/>
        <end position="429"/>
    </location>
</feature>
<feature type="helix" evidence="18">
    <location>
        <begin position="437"/>
        <end position="441"/>
    </location>
</feature>
<feature type="strand" evidence="18">
    <location>
        <begin position="449"/>
        <end position="451"/>
    </location>
</feature>
<feature type="helix" evidence="18">
    <location>
        <begin position="462"/>
        <end position="466"/>
    </location>
</feature>
<feature type="strand" evidence="18">
    <location>
        <begin position="472"/>
        <end position="474"/>
    </location>
</feature>
<feature type="turn" evidence="18">
    <location>
        <begin position="487"/>
        <end position="491"/>
    </location>
</feature>
<feature type="helix" evidence="18">
    <location>
        <begin position="504"/>
        <end position="516"/>
    </location>
</feature>
<feature type="turn" evidence="18">
    <location>
        <begin position="517"/>
        <end position="520"/>
    </location>
</feature>
<feature type="strand" evidence="18">
    <location>
        <begin position="521"/>
        <end position="523"/>
    </location>
</feature>
<feature type="turn" evidence="18">
    <location>
        <begin position="529"/>
        <end position="531"/>
    </location>
</feature>
<feature type="helix" evidence="18">
    <location>
        <begin position="536"/>
        <end position="538"/>
    </location>
</feature>
<feature type="helix" evidence="21">
    <location>
        <begin position="628"/>
        <end position="630"/>
    </location>
</feature>
<feature type="strand" evidence="21">
    <location>
        <begin position="631"/>
        <end position="633"/>
    </location>
</feature>
<feature type="strand" evidence="21">
    <location>
        <begin position="637"/>
        <end position="642"/>
    </location>
</feature>
<feature type="helix" evidence="21">
    <location>
        <begin position="645"/>
        <end position="647"/>
    </location>
</feature>
<feature type="helix" evidence="21">
    <location>
        <begin position="648"/>
        <end position="653"/>
    </location>
</feature>
<feature type="helix" evidence="21">
    <location>
        <begin position="655"/>
        <end position="660"/>
    </location>
</feature>
<feature type="turn" evidence="21">
    <location>
        <begin position="661"/>
        <end position="663"/>
    </location>
</feature>
<feature type="strand" evidence="21">
    <location>
        <begin position="666"/>
        <end position="668"/>
    </location>
</feature>
<feature type="turn" evidence="21">
    <location>
        <begin position="669"/>
        <end position="671"/>
    </location>
</feature>
<feature type="helix" evidence="21">
    <location>
        <begin position="679"/>
        <end position="688"/>
    </location>
</feature>
<feature type="strand" evidence="21">
    <location>
        <begin position="690"/>
        <end position="698"/>
    </location>
</feature>
<feature type="helix" evidence="21">
    <location>
        <begin position="699"/>
        <end position="704"/>
    </location>
</feature>
<feature type="helix" evidence="21">
    <location>
        <begin position="706"/>
        <end position="713"/>
    </location>
</feature>
<feature type="strand" evidence="21">
    <location>
        <begin position="726"/>
        <end position="732"/>
    </location>
</feature>
<feature type="helix" evidence="21">
    <location>
        <begin position="736"/>
        <end position="738"/>
    </location>
</feature>
<feature type="helix" evidence="21">
    <location>
        <begin position="744"/>
        <end position="751"/>
    </location>
</feature>
<feature type="strand" evidence="20">
    <location>
        <begin position="755"/>
        <end position="757"/>
    </location>
</feature>
<feature type="helix" evidence="21">
    <location>
        <begin position="762"/>
        <end position="764"/>
    </location>
</feature>
<feature type="helix" evidence="21">
    <location>
        <begin position="765"/>
        <end position="777"/>
    </location>
</feature>
<accession>Q15399</accession>
<accession>D1CS39</accession>
<accession>D1CS41</accession>
<accession>O15452</accession>
<accession>Q32MK3</accession>
<accession>Q32MK4</accession>
<accession>Q9UG90</accession>